<feature type="chain" id="PRO_0000139326" description="Proline--tRNA ligase">
    <location>
        <begin position="1"/>
        <end position="568"/>
    </location>
</feature>
<feature type="sequence conflict" description="In Ref. 3; BAA98706." evidence="2" ref="3">
    <original>Q</original>
    <variation>L</variation>
    <location>
        <position position="430"/>
    </location>
</feature>
<feature type="sequence conflict" description="In Ref. 3; BAA98706." evidence="2" ref="3">
    <original>A</original>
    <variation>P</variation>
    <location>
        <position position="460"/>
    </location>
</feature>
<name>SYP_CHLPN</name>
<proteinExistence type="inferred from homology"/>
<accession>Q9Z851</accession>
<accession>Q9JSE4</accession>
<protein>
    <recommendedName>
        <fullName evidence="1">Proline--tRNA ligase</fullName>
        <ecNumber evidence="1">6.1.1.15</ecNumber>
    </recommendedName>
    <alternativeName>
        <fullName evidence="1">Prolyl-tRNA synthetase</fullName>
        <shortName evidence="1">ProRS</shortName>
    </alternativeName>
</protein>
<keyword id="KW-0030">Aminoacyl-tRNA synthetase</keyword>
<keyword id="KW-0067">ATP-binding</keyword>
<keyword id="KW-0963">Cytoplasm</keyword>
<keyword id="KW-0436">Ligase</keyword>
<keyword id="KW-0547">Nucleotide-binding</keyword>
<keyword id="KW-0648">Protein biosynthesis</keyword>
<organism>
    <name type="scientific">Chlamydia pneumoniae</name>
    <name type="common">Chlamydophila pneumoniae</name>
    <dbReference type="NCBI Taxonomy" id="83558"/>
    <lineage>
        <taxon>Bacteria</taxon>
        <taxon>Pseudomonadati</taxon>
        <taxon>Chlamydiota</taxon>
        <taxon>Chlamydiia</taxon>
        <taxon>Chlamydiales</taxon>
        <taxon>Chlamydiaceae</taxon>
        <taxon>Chlamydia/Chlamydophila group</taxon>
        <taxon>Chlamydia</taxon>
    </lineage>
</organism>
<sequence length="568" mass="63807">MKTSQLFYKTSKNANKSAAVLSNELLEKAGYLFKVSKGVYTYTPLLWRVVSKMMNIIREELNAIGGQELLLPLLHNAELWQHTGRWEAFTSEGLLYTLKDREGKSHCLAPTHEEVICSFVAQWLSSKRQLPLHLYQIATKFRDEIRPRFGLIRSRELLMEDSYTFSDSPEQMNEQYEKLRSAYSKIFDRLGLAYVIVTADGGKIGKGKSEEFQVLCSLGEDTICVSGSYGANIEAAVSIPPQHAYDREFLPVEEVATPGITTIEALANFFSIPLHKILKTLVVKLSYSNEEKFIAIGMRGDRQVNLVKVASKLNADDIALASDEEIERVLGTEKGFIGPLNCPIDFFADETTSPMTNFVCAGNAKDKHYVNVNWDRDLLPPQYGDFLLAEEGDTCPENPGHPYRIYQGIEVAHIFNLGTRYTDSFEVNFQDEHGQTQQCWMGTYGIGVGRTLAACVEQLADDRGIVWPKALAPFSITIAFNGGDTVSQELAETIYHELQSQGYEPLLDDRDERLGFKLKDSDLIGIPYKLILGKSYQSSGIFEIESRSGEKYTVSPEAFPTWCQNHLA</sequence>
<reference key="1">
    <citation type="journal article" date="1999" name="Nat. Genet.">
        <title>Comparative genomes of Chlamydia pneumoniae and C. trachomatis.</title>
        <authorList>
            <person name="Kalman S."/>
            <person name="Mitchell W.P."/>
            <person name="Marathe R."/>
            <person name="Lammel C.J."/>
            <person name="Fan J."/>
            <person name="Hyman R.W."/>
            <person name="Olinger L."/>
            <person name="Grimwood J."/>
            <person name="Davis R.W."/>
            <person name="Stephens R.S."/>
        </authorList>
    </citation>
    <scope>NUCLEOTIDE SEQUENCE [LARGE SCALE GENOMIC DNA]</scope>
    <source>
        <strain>CWL029</strain>
    </source>
</reference>
<reference key="2">
    <citation type="journal article" date="2000" name="Nucleic Acids Res.">
        <title>Genome sequences of Chlamydia trachomatis MoPn and Chlamydia pneumoniae AR39.</title>
        <authorList>
            <person name="Read T.D."/>
            <person name="Brunham R.C."/>
            <person name="Shen C."/>
            <person name="Gill S.R."/>
            <person name="Heidelberg J.F."/>
            <person name="White O."/>
            <person name="Hickey E.K."/>
            <person name="Peterson J.D."/>
            <person name="Utterback T.R."/>
            <person name="Berry K.J."/>
            <person name="Bass S."/>
            <person name="Linher K.D."/>
            <person name="Weidman J.F."/>
            <person name="Khouri H.M."/>
            <person name="Craven B."/>
            <person name="Bowman C."/>
            <person name="Dodson R.J."/>
            <person name="Gwinn M.L."/>
            <person name="Nelson W.C."/>
            <person name="DeBoy R.T."/>
            <person name="Kolonay J.F."/>
            <person name="McClarty G."/>
            <person name="Salzberg S.L."/>
            <person name="Eisen J.A."/>
            <person name="Fraser C.M."/>
        </authorList>
    </citation>
    <scope>NUCLEOTIDE SEQUENCE [LARGE SCALE GENOMIC DNA]</scope>
    <source>
        <strain>AR39</strain>
    </source>
</reference>
<reference key="3">
    <citation type="journal article" date="2000" name="Nucleic Acids Res.">
        <title>Comparison of whole genome sequences of Chlamydia pneumoniae J138 from Japan and CWL029 from USA.</title>
        <authorList>
            <person name="Shirai M."/>
            <person name="Hirakawa H."/>
            <person name="Kimoto M."/>
            <person name="Tabuchi M."/>
            <person name="Kishi F."/>
            <person name="Ouchi K."/>
            <person name="Shiba T."/>
            <person name="Ishii K."/>
            <person name="Hattori M."/>
            <person name="Kuhara S."/>
            <person name="Nakazawa T."/>
        </authorList>
    </citation>
    <scope>NUCLEOTIDE SEQUENCE [LARGE SCALE GENOMIC DNA]</scope>
    <source>
        <strain>J138</strain>
    </source>
</reference>
<reference key="4">
    <citation type="submission" date="2002-05" db="EMBL/GenBank/DDBJ databases">
        <title>The genome sequence of Chlamydia pneumoniae TW183 and comparison with other Chlamydia strains based on whole genome sequence analysis.</title>
        <authorList>
            <person name="Geng M.M."/>
            <person name="Schuhmacher A."/>
            <person name="Muehldorfer I."/>
            <person name="Bensch K.W."/>
            <person name="Schaefer K.P."/>
            <person name="Schneider S."/>
            <person name="Pohl T."/>
            <person name="Essig A."/>
            <person name="Marre R."/>
            <person name="Melchers K."/>
        </authorList>
    </citation>
    <scope>NUCLEOTIDE SEQUENCE [LARGE SCALE GENOMIC DNA]</scope>
    <source>
        <strain>TW-183</strain>
    </source>
</reference>
<gene>
    <name evidence="1" type="primary">proS</name>
    <name type="ordered locus">CPn_0500</name>
    <name type="ordered locus">CP_0254</name>
    <name type="ordered locus">CpB0520</name>
</gene>
<comment type="function">
    <text evidence="1">Catalyzes the attachment of proline to tRNA(Pro) in a two-step reaction: proline is first activated by ATP to form Pro-AMP and then transferred to the acceptor end of tRNA(Pro). As ProRS can inadvertently accommodate and process non-cognate amino acids such as alanine and cysteine, to avoid such errors it has two additional distinct editing activities against alanine. One activity is designated as 'pretransfer' editing and involves the tRNA(Pro)-independent hydrolysis of activated Ala-AMP. The other activity is designated 'posttransfer' editing and involves deacylation of mischarged Ala-tRNA(Pro). The misacylated Cys-tRNA(Pro) is not edited by ProRS.</text>
</comment>
<comment type="catalytic activity">
    <reaction evidence="1">
        <text>tRNA(Pro) + L-proline + ATP = L-prolyl-tRNA(Pro) + AMP + diphosphate</text>
        <dbReference type="Rhea" id="RHEA:14305"/>
        <dbReference type="Rhea" id="RHEA-COMP:9700"/>
        <dbReference type="Rhea" id="RHEA-COMP:9702"/>
        <dbReference type="ChEBI" id="CHEBI:30616"/>
        <dbReference type="ChEBI" id="CHEBI:33019"/>
        <dbReference type="ChEBI" id="CHEBI:60039"/>
        <dbReference type="ChEBI" id="CHEBI:78442"/>
        <dbReference type="ChEBI" id="CHEBI:78532"/>
        <dbReference type="ChEBI" id="CHEBI:456215"/>
        <dbReference type="EC" id="6.1.1.15"/>
    </reaction>
</comment>
<comment type="subunit">
    <text evidence="1">Homodimer.</text>
</comment>
<comment type="subcellular location">
    <subcellularLocation>
        <location evidence="1">Cytoplasm</location>
    </subcellularLocation>
</comment>
<comment type="domain">
    <text evidence="1">Consists of three domains: the N-terminal catalytic domain, the editing domain and the C-terminal anticodon-binding domain.</text>
</comment>
<comment type="similarity">
    <text evidence="1">Belongs to the class-II aminoacyl-tRNA synthetase family. ProS type 1 subfamily.</text>
</comment>
<dbReference type="EC" id="6.1.1.15" evidence="1"/>
<dbReference type="EMBL" id="AE001363">
    <property type="protein sequence ID" value="AAD18640.1"/>
    <property type="molecule type" value="Genomic_DNA"/>
</dbReference>
<dbReference type="EMBL" id="AE002161">
    <property type="protein sequence ID" value="AAF38117.1"/>
    <property type="molecule type" value="Genomic_DNA"/>
</dbReference>
<dbReference type="EMBL" id="BA000008">
    <property type="protein sequence ID" value="BAA98706.1"/>
    <property type="molecule type" value="Genomic_DNA"/>
</dbReference>
<dbReference type="EMBL" id="AE009440">
    <property type="protein sequence ID" value="AAP98449.1"/>
    <property type="molecule type" value="Genomic_DNA"/>
</dbReference>
<dbReference type="PIR" id="F72070">
    <property type="entry name" value="F72070"/>
</dbReference>
<dbReference type="PIR" id="H86552">
    <property type="entry name" value="H86552"/>
</dbReference>
<dbReference type="RefSeq" id="NP_224696.1">
    <property type="nucleotide sequence ID" value="NC_000922.1"/>
</dbReference>
<dbReference type="RefSeq" id="WP_010883138.1">
    <property type="nucleotide sequence ID" value="NZ_LN847257.1"/>
</dbReference>
<dbReference type="SMR" id="Q9Z851"/>
<dbReference type="STRING" id="406984.CPK_ORF01016"/>
<dbReference type="GeneID" id="45050543"/>
<dbReference type="KEGG" id="cpa:CP_0254"/>
<dbReference type="KEGG" id="cpj:proS"/>
<dbReference type="KEGG" id="cpn:CPn_0500"/>
<dbReference type="KEGG" id="cpt:CpB0520"/>
<dbReference type="PATRIC" id="fig|115713.3.peg.559"/>
<dbReference type="eggNOG" id="COG0442">
    <property type="taxonomic scope" value="Bacteria"/>
</dbReference>
<dbReference type="HOGENOM" id="CLU_016739_0_0_0"/>
<dbReference type="OrthoDB" id="9809052at2"/>
<dbReference type="Proteomes" id="UP000000583">
    <property type="component" value="Chromosome"/>
</dbReference>
<dbReference type="Proteomes" id="UP000000801">
    <property type="component" value="Chromosome"/>
</dbReference>
<dbReference type="GO" id="GO:0005829">
    <property type="term" value="C:cytosol"/>
    <property type="evidence" value="ECO:0007669"/>
    <property type="project" value="TreeGrafter"/>
</dbReference>
<dbReference type="GO" id="GO:0002161">
    <property type="term" value="F:aminoacyl-tRNA deacylase activity"/>
    <property type="evidence" value="ECO:0007669"/>
    <property type="project" value="InterPro"/>
</dbReference>
<dbReference type="GO" id="GO:0005524">
    <property type="term" value="F:ATP binding"/>
    <property type="evidence" value="ECO:0007669"/>
    <property type="project" value="UniProtKB-UniRule"/>
</dbReference>
<dbReference type="GO" id="GO:0004827">
    <property type="term" value="F:proline-tRNA ligase activity"/>
    <property type="evidence" value="ECO:0007669"/>
    <property type="project" value="UniProtKB-UniRule"/>
</dbReference>
<dbReference type="GO" id="GO:0006433">
    <property type="term" value="P:prolyl-tRNA aminoacylation"/>
    <property type="evidence" value="ECO:0007669"/>
    <property type="project" value="UniProtKB-UniRule"/>
</dbReference>
<dbReference type="CDD" id="cd04334">
    <property type="entry name" value="ProRS-INS"/>
    <property type="match status" value="1"/>
</dbReference>
<dbReference type="CDD" id="cd00861">
    <property type="entry name" value="ProRS_anticodon_short"/>
    <property type="match status" value="1"/>
</dbReference>
<dbReference type="Gene3D" id="3.40.50.800">
    <property type="entry name" value="Anticodon-binding domain"/>
    <property type="match status" value="1"/>
</dbReference>
<dbReference type="Gene3D" id="3.30.930.10">
    <property type="entry name" value="Bira Bifunctional Protein, Domain 2"/>
    <property type="match status" value="2"/>
</dbReference>
<dbReference type="Gene3D" id="3.90.960.10">
    <property type="entry name" value="YbaK/aminoacyl-tRNA synthetase-associated domain"/>
    <property type="match status" value="1"/>
</dbReference>
<dbReference type="HAMAP" id="MF_01569">
    <property type="entry name" value="Pro_tRNA_synth_type1"/>
    <property type="match status" value="1"/>
</dbReference>
<dbReference type="InterPro" id="IPR002314">
    <property type="entry name" value="aa-tRNA-synt_IIb"/>
</dbReference>
<dbReference type="InterPro" id="IPR006195">
    <property type="entry name" value="aa-tRNA-synth_II"/>
</dbReference>
<dbReference type="InterPro" id="IPR045864">
    <property type="entry name" value="aa-tRNA-synth_II/BPL/LPL"/>
</dbReference>
<dbReference type="InterPro" id="IPR004154">
    <property type="entry name" value="Anticodon-bd"/>
</dbReference>
<dbReference type="InterPro" id="IPR036621">
    <property type="entry name" value="Anticodon-bd_dom_sf"/>
</dbReference>
<dbReference type="InterPro" id="IPR002316">
    <property type="entry name" value="Pro-tRNA-ligase_IIa"/>
</dbReference>
<dbReference type="InterPro" id="IPR004500">
    <property type="entry name" value="Pro-tRNA-synth_IIa_bac-type"/>
</dbReference>
<dbReference type="InterPro" id="IPR023717">
    <property type="entry name" value="Pro-tRNA-Synthase_IIa_type1"/>
</dbReference>
<dbReference type="InterPro" id="IPR050062">
    <property type="entry name" value="Pro-tRNA_synthetase"/>
</dbReference>
<dbReference type="InterPro" id="IPR044140">
    <property type="entry name" value="ProRS_anticodon_short"/>
</dbReference>
<dbReference type="InterPro" id="IPR036754">
    <property type="entry name" value="YbaK/aa-tRNA-synt-asso_dom_sf"/>
</dbReference>
<dbReference type="InterPro" id="IPR007214">
    <property type="entry name" value="YbaK/aa-tRNA-synth-assoc-dom"/>
</dbReference>
<dbReference type="NCBIfam" id="NF006625">
    <property type="entry name" value="PRK09194.1"/>
    <property type="match status" value="1"/>
</dbReference>
<dbReference type="NCBIfam" id="TIGR00409">
    <property type="entry name" value="proS_fam_II"/>
    <property type="match status" value="1"/>
</dbReference>
<dbReference type="PANTHER" id="PTHR42753">
    <property type="entry name" value="MITOCHONDRIAL RIBOSOME PROTEIN L39/PROLYL-TRNA LIGASE FAMILY MEMBER"/>
    <property type="match status" value="1"/>
</dbReference>
<dbReference type="PANTHER" id="PTHR42753:SF2">
    <property type="entry name" value="PROLINE--TRNA LIGASE"/>
    <property type="match status" value="1"/>
</dbReference>
<dbReference type="Pfam" id="PF03129">
    <property type="entry name" value="HGTP_anticodon"/>
    <property type="match status" value="1"/>
</dbReference>
<dbReference type="Pfam" id="PF00587">
    <property type="entry name" value="tRNA-synt_2b"/>
    <property type="match status" value="1"/>
</dbReference>
<dbReference type="Pfam" id="PF04073">
    <property type="entry name" value="tRNA_edit"/>
    <property type="match status" value="1"/>
</dbReference>
<dbReference type="PRINTS" id="PR01046">
    <property type="entry name" value="TRNASYNTHPRO"/>
</dbReference>
<dbReference type="SUPFAM" id="SSF52954">
    <property type="entry name" value="Class II aaRS ABD-related"/>
    <property type="match status" value="1"/>
</dbReference>
<dbReference type="SUPFAM" id="SSF55681">
    <property type="entry name" value="Class II aaRS and biotin synthetases"/>
    <property type="match status" value="1"/>
</dbReference>
<dbReference type="SUPFAM" id="SSF55826">
    <property type="entry name" value="YbaK/ProRS associated domain"/>
    <property type="match status" value="1"/>
</dbReference>
<dbReference type="PROSITE" id="PS50862">
    <property type="entry name" value="AA_TRNA_LIGASE_II"/>
    <property type="match status" value="1"/>
</dbReference>
<evidence type="ECO:0000255" key="1">
    <source>
        <dbReference type="HAMAP-Rule" id="MF_01569"/>
    </source>
</evidence>
<evidence type="ECO:0000305" key="2"/>